<reference key="1">
    <citation type="journal article" date="1986" name="EMBO J.">
        <title>The complete nucleotide sequence of the tobacco chloroplast genome: its gene organization and expression.</title>
        <authorList>
            <person name="Shinozaki K."/>
            <person name="Ohme M."/>
            <person name="Tanaka M."/>
            <person name="Wakasugi T."/>
            <person name="Hayashida N."/>
            <person name="Matsubayashi T."/>
            <person name="Zaita N."/>
            <person name="Chunwongse J."/>
            <person name="Obokata J."/>
            <person name="Yamaguchi-Shinozaki K."/>
            <person name="Ohto C."/>
            <person name="Torazawa K."/>
            <person name="Meng B.-Y."/>
            <person name="Sugita M."/>
            <person name="Deno H."/>
            <person name="Kamogashira T."/>
            <person name="Yamada K."/>
            <person name="Kusuda J."/>
            <person name="Takaiwa F."/>
            <person name="Kato A."/>
            <person name="Tohdoh N."/>
            <person name="Shimada H."/>
            <person name="Sugiura M."/>
        </authorList>
    </citation>
    <scope>NUCLEOTIDE SEQUENCE [LARGE SCALE GENOMIC DNA]</scope>
    <source>
        <strain>cv. Bright Yellow 4</strain>
    </source>
</reference>
<keyword id="KW-0150">Chloroplast</keyword>
<keyword id="KW-0934">Plastid</keyword>
<keyword id="KW-1185">Reference proteome</keyword>
<keyword id="KW-0687">Ribonucleoprotein</keyword>
<keyword id="KW-0689">Ribosomal protein</keyword>
<organism>
    <name type="scientific">Nicotiana tabacum</name>
    <name type="common">Common tobacco</name>
    <dbReference type="NCBI Taxonomy" id="4097"/>
    <lineage>
        <taxon>Eukaryota</taxon>
        <taxon>Viridiplantae</taxon>
        <taxon>Streptophyta</taxon>
        <taxon>Embryophyta</taxon>
        <taxon>Tracheophyta</taxon>
        <taxon>Spermatophyta</taxon>
        <taxon>Magnoliopsida</taxon>
        <taxon>eudicotyledons</taxon>
        <taxon>Gunneridae</taxon>
        <taxon>Pentapetalae</taxon>
        <taxon>asterids</taxon>
        <taxon>lamiids</taxon>
        <taxon>Solanales</taxon>
        <taxon>Solanaceae</taxon>
        <taxon>Nicotianoideae</taxon>
        <taxon>Nicotianeae</taxon>
        <taxon>Nicotiana</taxon>
    </lineage>
</organism>
<feature type="chain" id="PRO_0000115638" description="Small ribosomal subunit protein uS15c">
    <location>
        <begin position="1"/>
        <end position="87"/>
    </location>
</feature>
<comment type="subunit">
    <text evidence="1">Part of the 30S ribosomal subunit.</text>
</comment>
<comment type="subcellular location">
    <subcellularLocation>
        <location>Plastid</location>
        <location>Chloroplast</location>
    </subcellularLocation>
</comment>
<comment type="similarity">
    <text evidence="2">Belongs to the universal ribosomal protein uS15 family.</text>
</comment>
<name>RR15_TOBAC</name>
<dbReference type="EMBL" id="Z00044">
    <property type="protein sequence ID" value="CAA77399.1"/>
    <property type="molecule type" value="Genomic_DNA"/>
</dbReference>
<dbReference type="PIR" id="A02737">
    <property type="entry name" value="R3NT15"/>
</dbReference>
<dbReference type="RefSeq" id="NP_054564.1">
    <property type="nucleotide sequence ID" value="NC_001879.2"/>
</dbReference>
<dbReference type="SMR" id="P06373"/>
<dbReference type="GeneID" id="800489"/>
<dbReference type="KEGG" id="nta:800489"/>
<dbReference type="OMA" id="RINYLTE"/>
<dbReference type="OrthoDB" id="441444at2759"/>
<dbReference type="Proteomes" id="UP000084051">
    <property type="component" value="Unplaced"/>
</dbReference>
<dbReference type="GO" id="GO:0009507">
    <property type="term" value="C:chloroplast"/>
    <property type="evidence" value="ECO:0007669"/>
    <property type="project" value="UniProtKB-SubCell"/>
</dbReference>
<dbReference type="GO" id="GO:1990904">
    <property type="term" value="C:ribonucleoprotein complex"/>
    <property type="evidence" value="ECO:0007669"/>
    <property type="project" value="UniProtKB-KW"/>
</dbReference>
<dbReference type="GO" id="GO:0005840">
    <property type="term" value="C:ribosome"/>
    <property type="evidence" value="ECO:0007669"/>
    <property type="project" value="UniProtKB-KW"/>
</dbReference>
<dbReference type="GO" id="GO:0003735">
    <property type="term" value="F:structural constituent of ribosome"/>
    <property type="evidence" value="ECO:0007669"/>
    <property type="project" value="InterPro"/>
</dbReference>
<dbReference type="GO" id="GO:0006412">
    <property type="term" value="P:translation"/>
    <property type="evidence" value="ECO:0007669"/>
    <property type="project" value="UniProtKB-UniRule"/>
</dbReference>
<dbReference type="CDD" id="cd00353">
    <property type="entry name" value="Ribosomal_S15p_S13e"/>
    <property type="match status" value="1"/>
</dbReference>
<dbReference type="Gene3D" id="1.10.287.10">
    <property type="entry name" value="S15/NS1, RNA-binding"/>
    <property type="match status" value="1"/>
</dbReference>
<dbReference type="HAMAP" id="MF_01343_B">
    <property type="entry name" value="Ribosomal_uS15_B"/>
    <property type="match status" value="1"/>
</dbReference>
<dbReference type="InterPro" id="IPR000589">
    <property type="entry name" value="Ribosomal_uS15"/>
</dbReference>
<dbReference type="InterPro" id="IPR005290">
    <property type="entry name" value="Ribosomal_uS15_bac-type"/>
</dbReference>
<dbReference type="InterPro" id="IPR009068">
    <property type="entry name" value="uS15_NS1_RNA-bd_sf"/>
</dbReference>
<dbReference type="NCBIfam" id="TIGR00952">
    <property type="entry name" value="S15_bact"/>
    <property type="match status" value="1"/>
</dbReference>
<dbReference type="PANTHER" id="PTHR23321">
    <property type="entry name" value="RIBOSOMAL PROTEIN S15, BACTERIAL AND ORGANELLAR"/>
    <property type="match status" value="1"/>
</dbReference>
<dbReference type="PANTHER" id="PTHR23321:SF26">
    <property type="entry name" value="SMALL RIBOSOMAL SUBUNIT PROTEIN US15M"/>
    <property type="match status" value="1"/>
</dbReference>
<dbReference type="Pfam" id="PF00312">
    <property type="entry name" value="Ribosomal_S15"/>
    <property type="match status" value="1"/>
</dbReference>
<dbReference type="SMART" id="SM01387">
    <property type="entry name" value="Ribosomal_S15"/>
    <property type="match status" value="1"/>
</dbReference>
<dbReference type="SUPFAM" id="SSF47060">
    <property type="entry name" value="S15/NS1 RNA-binding domain"/>
    <property type="match status" value="1"/>
</dbReference>
<dbReference type="PROSITE" id="PS00362">
    <property type="entry name" value="RIBOSOMAL_S15"/>
    <property type="match status" value="1"/>
</dbReference>
<evidence type="ECO:0000250" key="1"/>
<evidence type="ECO:0000305" key="2"/>
<geneLocation type="chloroplast"/>
<proteinExistence type="inferred from homology"/>
<protein>
    <recommendedName>
        <fullName evidence="2">Small ribosomal subunit protein uS15c</fullName>
    </recommendedName>
    <alternativeName>
        <fullName>30S ribosomal protein S15, chloroplastic</fullName>
    </alternativeName>
</protein>
<accession>P06373</accession>
<gene>
    <name type="primary">rps15</name>
</gene>
<sequence length="87" mass="10445">MVKNSVISVISQEEKRGSVEFQVFNFTNKIRRLTSHLELHKKDYLSQRGLKKILGKRQRLLAYLSKKNRVRYKELINQLDIRETKTR</sequence>